<sequence>MSLLTEVETYVLSIIPSGPLKAEIAQRLEDVFAGKNTDLEVLMEWLKTRPILSPLTKGVLGFVFTLTVPSERGLQRRRFVQNALNGNGDPNNMDKAVKLYRKLKREITFYGAKEVALSYSTGALASCMGLIYDRMGTVTTEVAFGLVCATCEQIADSQHRSHRQMVATTNPLIRHENRMVMASTTAKAMEQMAGSSEQAAEAMEVASQARQMVQAMRTIGTHPSSSAGLKDDLLENLQAYQKRMGVQMQRFK</sequence>
<organismHost>
    <name type="scientific">Aves</name>
    <dbReference type="NCBI Taxonomy" id="8782"/>
</organismHost>
<dbReference type="EMBL" id="X05905">
    <property type="protein sequence ID" value="CAA29334.1"/>
    <property type="molecule type" value="Genomic_RNA"/>
</dbReference>
<dbReference type="EMBL" id="M55474">
    <property type="protein sequence ID" value="AAA43258.1"/>
    <property type="molecule type" value="Genomic_RNA"/>
</dbReference>
<dbReference type="EMBL" id="M55475">
    <property type="protein sequence ID" value="AAA43260.1"/>
    <property type="molecule type" value="Genomic_RNA"/>
</dbReference>
<dbReference type="SMR" id="P03488"/>
<dbReference type="GO" id="GO:0042025">
    <property type="term" value="C:host cell nucleus"/>
    <property type="evidence" value="ECO:0007669"/>
    <property type="project" value="UniProtKB-SubCell"/>
</dbReference>
<dbReference type="GO" id="GO:0016020">
    <property type="term" value="C:membrane"/>
    <property type="evidence" value="ECO:0007669"/>
    <property type="project" value="UniProtKB-KW"/>
</dbReference>
<dbReference type="GO" id="GO:0055036">
    <property type="term" value="C:virion membrane"/>
    <property type="evidence" value="ECO:0007669"/>
    <property type="project" value="UniProtKB-SubCell"/>
</dbReference>
<dbReference type="GO" id="GO:0003723">
    <property type="term" value="F:RNA binding"/>
    <property type="evidence" value="ECO:0007669"/>
    <property type="project" value="UniProtKB-UniRule"/>
</dbReference>
<dbReference type="GO" id="GO:0039660">
    <property type="term" value="F:structural constituent of virion"/>
    <property type="evidence" value="ECO:0007669"/>
    <property type="project" value="UniProtKB-UniRule"/>
</dbReference>
<dbReference type="GO" id="GO:0046761">
    <property type="term" value="P:viral budding from plasma membrane"/>
    <property type="evidence" value="ECO:0007669"/>
    <property type="project" value="UniProtKB-UniRule"/>
</dbReference>
<dbReference type="FunFam" id="1.10.10.180:FF:000001">
    <property type="entry name" value="Matrix protein 1"/>
    <property type="match status" value="1"/>
</dbReference>
<dbReference type="FunFam" id="1.20.91.10:FF:000001">
    <property type="entry name" value="Matrix protein 1"/>
    <property type="match status" value="1"/>
</dbReference>
<dbReference type="Gene3D" id="1.10.10.180">
    <property type="match status" value="1"/>
</dbReference>
<dbReference type="Gene3D" id="1.20.91.10">
    <property type="match status" value="1"/>
</dbReference>
<dbReference type="HAMAP" id="MF_04068">
    <property type="entry name" value="INFV_M1"/>
    <property type="match status" value="1"/>
</dbReference>
<dbReference type="InterPro" id="IPR036039">
    <property type="entry name" value="Flu_matrix_M1"/>
</dbReference>
<dbReference type="InterPro" id="IPR013188">
    <property type="entry name" value="Flu_matrix_M1_C"/>
</dbReference>
<dbReference type="InterPro" id="IPR001561">
    <property type="entry name" value="Flu_matrix_M1_N"/>
</dbReference>
<dbReference type="InterPro" id="IPR015423">
    <property type="entry name" value="Flu_matrix_M1_N_sub1"/>
</dbReference>
<dbReference type="InterPro" id="IPR015799">
    <property type="entry name" value="Flu_matrix_M1_N_sub2"/>
</dbReference>
<dbReference type="InterPro" id="IPR037533">
    <property type="entry name" value="INFV_M1"/>
</dbReference>
<dbReference type="Pfam" id="PF00598">
    <property type="entry name" value="Flu_M1"/>
    <property type="match status" value="1"/>
</dbReference>
<dbReference type="Pfam" id="PF08289">
    <property type="entry name" value="Flu_M1_C"/>
    <property type="match status" value="1"/>
</dbReference>
<dbReference type="SMART" id="SM00759">
    <property type="entry name" value="Flu_M1_C"/>
    <property type="match status" value="1"/>
</dbReference>
<dbReference type="SUPFAM" id="SSF48145">
    <property type="entry name" value="Influenza virus matrix protein M1"/>
    <property type="match status" value="1"/>
</dbReference>
<evidence type="ECO:0000255" key="1">
    <source>
        <dbReference type="HAMAP-Rule" id="MF_04068"/>
    </source>
</evidence>
<protein>
    <recommendedName>
        <fullName evidence="1">Matrix protein 1</fullName>
        <shortName evidence="1">M1</shortName>
    </recommendedName>
</protein>
<accession>P03488</accession>
<accession>Q89647</accession>
<keyword id="KW-0025">Alternative splicing</keyword>
<keyword id="KW-1048">Host nucleus</keyword>
<keyword id="KW-0472">Membrane</keyword>
<keyword id="KW-0694">RNA-binding</keyword>
<keyword id="KW-0468">Viral matrix protein</keyword>
<keyword id="KW-0946">Virion</keyword>
<feature type="chain" id="PRO_0000078855" description="Matrix protein 1">
    <location>
        <begin position="1"/>
        <end position="252"/>
    </location>
</feature>
<feature type="region of interest" description="Membrane-binding" evidence="1">
    <location>
        <begin position="1"/>
        <end position="164"/>
    </location>
</feature>
<feature type="region of interest" description="RNP-binding" evidence="1">
    <location>
        <begin position="165"/>
        <end position="252"/>
    </location>
</feature>
<feature type="short sequence motif" description="Nuclear localization signal" evidence="1">
    <location>
        <begin position="101"/>
        <end position="105"/>
    </location>
</feature>
<feature type="sequence conflict" description="In Ref. 2; AAA43258/AAA43260." ref="2">
    <original>V</original>
    <variation>I</variation>
    <location>
        <position position="59"/>
    </location>
</feature>
<feature type="sequence conflict" description="In Ref. 2; AAA43258/AAA43260." ref="2">
    <original>R</original>
    <variation>Q</variation>
    <location>
        <position position="72"/>
    </location>
</feature>
<feature type="sequence conflict" description="In Ref. 2; AAA43258/AAA43260." ref="2">
    <original>D</original>
    <variation>N</variation>
    <location>
        <position position="133"/>
    </location>
</feature>
<feature type="sequence conflict" description="In Ref. 2; AAA43258/AAA43260." ref="2">
    <original>S</original>
    <variation>I</variation>
    <location>
        <position position="196"/>
    </location>
</feature>
<name>M1_I34A0</name>
<reference key="1">
    <citation type="journal article" date="1982" name="J. Gen. Virol.">
        <title>Nucleotide sequence of fowl plague virus RNA segment 7.</title>
        <authorList>
            <person name="McCauley J.W."/>
            <person name="Mahy B.W.J."/>
            <person name="Inglis S.C."/>
        </authorList>
    </citation>
    <scope>NUCLEOTIDE SEQUENCE [GENOMIC RNA]</scope>
</reference>
<reference key="2">
    <citation type="journal article" date="1991" name="Virology">
        <title>Evolution of pig influenza viruses.</title>
        <authorList>
            <person name="Schultz U."/>
            <person name="Fitch W.M."/>
            <person name="Ludwig S."/>
            <person name="Mandler J."/>
            <person name="Scholtissek C."/>
        </authorList>
    </citation>
    <scope>NUCLEOTIDE SEQUENCE [GENOMIC RNA]</scope>
</reference>
<proteinExistence type="inferred from homology"/>
<gene>
    <name evidence="1" type="primary">M</name>
</gene>
<organism>
    <name type="scientific">Influenza A virus (strain A/Fowl plague virus/Rostock/8/1934 H7N1)</name>
    <dbReference type="NCBI Taxonomy" id="392810"/>
    <lineage>
        <taxon>Viruses</taxon>
        <taxon>Riboviria</taxon>
        <taxon>Orthornavirae</taxon>
        <taxon>Negarnaviricota</taxon>
        <taxon>Polyploviricotina</taxon>
        <taxon>Insthoviricetes</taxon>
        <taxon>Articulavirales</taxon>
        <taxon>Orthomyxoviridae</taxon>
        <taxon>Alphainfluenzavirus</taxon>
        <taxon>Alphainfluenzavirus influenzae</taxon>
        <taxon>Influenza A virus</taxon>
    </lineage>
</organism>
<comment type="function">
    <text evidence="1">Plays critical roles in virus replication, from virus entry and uncoating to assembly and budding of the virus particle. M1 binding to ribonucleocapsids (RNPs) in nucleus seems to inhibit viral transcription. Interaction of viral NEP with M1-RNP is thought to promote nuclear export of the complex, which is targeted to the virion assembly site at the apical plasma membrane in polarized epithelial cells. Interactions with NA and HA may bring M1, a non-raft-associated protein, into lipid rafts. Forms a continuous shell on the inner side of the lipid bilayer in virion, where it binds the RNP. During virus entry into cell, the M2 ion channel acidifies the internal virion core, inducing M1 dissociation from the RNP. M1-free RNPs are transported to the nucleus, where viral transcription and replication can take place.</text>
</comment>
<comment type="function">
    <text evidence="1">Determines the virion's shape: spherical or filamentous. Clinical isolates of influenza are characterized by the presence of significant proportion of filamentous virions, whereas after multiple passage on eggs or cell culture, virions have only spherical morphology. Filamentous virions are thought to be important to infect neighboring cells, and spherical virions more suited to spread through aerosol between hosts organisms.</text>
</comment>
<comment type="subunit">
    <text evidence="1">Homodimer and homomultimer. Interacts with NEP. Binds ribonucleocapsid by both interacting with genomic RNA and NP protein. May interact with HA and NA. Cannot bind NP without genomic RNA.</text>
</comment>
<comment type="subcellular location">
    <subcellularLocation>
        <location evidence="1">Virion membrane</location>
        <topology evidence="1">Peripheral membrane protein</topology>
        <orientation evidence="1">Cytoplasmic side</orientation>
    </subcellularLocation>
    <subcellularLocation>
        <location evidence="1">Host nucleus</location>
    </subcellularLocation>
</comment>
<comment type="alternative products">
    <event type="alternative splicing"/>
    <isoform>
        <id>P03488-1</id>
        <name>M1</name>
        <sequence type="displayed"/>
    </isoform>
    <isoform>
        <id>P03492-1</id>
        <name>M2</name>
        <sequence type="external"/>
    </isoform>
    <text>Only the first 9 residues are shared by the 2 isoforms.</text>
</comment>
<comment type="miscellaneous">
    <text evidence="1">Most abundant protein in virion. When expressed alone can form virus-like particles in transfected cells.</text>
</comment>
<comment type="similarity">
    <text evidence="1">Belongs to the influenza viruses Matrix protein M1 family.</text>
</comment>